<organism>
    <name type="scientific">Pseudomonas aeruginosa (strain LESB58)</name>
    <dbReference type="NCBI Taxonomy" id="557722"/>
    <lineage>
        <taxon>Bacteria</taxon>
        <taxon>Pseudomonadati</taxon>
        <taxon>Pseudomonadota</taxon>
        <taxon>Gammaproteobacteria</taxon>
        <taxon>Pseudomonadales</taxon>
        <taxon>Pseudomonadaceae</taxon>
        <taxon>Pseudomonas</taxon>
    </lineage>
</organism>
<keyword id="KW-0131">Cell cycle</keyword>
<keyword id="KW-0132">Cell division</keyword>
<keyword id="KW-0143">Chaperone</keyword>
<keyword id="KW-0963">Cytoplasm</keyword>
<keyword id="KW-0413">Isomerase</keyword>
<keyword id="KW-0697">Rotamase</keyword>
<accession>B7VB77</accession>
<protein>
    <recommendedName>
        <fullName evidence="1">Trigger factor</fullName>
        <shortName evidence="1">TF</shortName>
        <ecNumber evidence="1">5.2.1.8</ecNumber>
    </recommendedName>
    <alternativeName>
        <fullName evidence="1">PPIase</fullName>
    </alternativeName>
</protein>
<feature type="chain" id="PRO_1000119521" description="Trigger factor">
    <location>
        <begin position="1"/>
        <end position="436"/>
    </location>
</feature>
<feature type="domain" description="PPIase FKBP-type" evidence="1">
    <location>
        <begin position="161"/>
        <end position="246"/>
    </location>
</feature>
<proteinExistence type="inferred from homology"/>
<comment type="function">
    <text evidence="1">Involved in protein export. Acts as a chaperone by maintaining the newly synthesized protein in an open conformation. Functions as a peptidyl-prolyl cis-trans isomerase.</text>
</comment>
<comment type="catalytic activity">
    <reaction evidence="1">
        <text>[protein]-peptidylproline (omega=180) = [protein]-peptidylproline (omega=0)</text>
        <dbReference type="Rhea" id="RHEA:16237"/>
        <dbReference type="Rhea" id="RHEA-COMP:10747"/>
        <dbReference type="Rhea" id="RHEA-COMP:10748"/>
        <dbReference type="ChEBI" id="CHEBI:83833"/>
        <dbReference type="ChEBI" id="CHEBI:83834"/>
        <dbReference type="EC" id="5.2.1.8"/>
    </reaction>
</comment>
<comment type="subcellular location">
    <subcellularLocation>
        <location>Cytoplasm</location>
    </subcellularLocation>
    <text evidence="1">About half TF is bound to the ribosome near the polypeptide exit tunnel while the other half is free in the cytoplasm.</text>
</comment>
<comment type="domain">
    <text evidence="1">Consists of 3 domains; the N-terminus binds the ribosome, the middle domain has PPIase activity, while the C-terminus has intrinsic chaperone activity on its own.</text>
</comment>
<comment type="similarity">
    <text evidence="1">Belongs to the FKBP-type PPIase family. Tig subfamily.</text>
</comment>
<dbReference type="EC" id="5.2.1.8" evidence="1"/>
<dbReference type="EMBL" id="FM209186">
    <property type="protein sequence ID" value="CAW28254.1"/>
    <property type="molecule type" value="Genomic_DNA"/>
</dbReference>
<dbReference type="RefSeq" id="WP_003087920.1">
    <property type="nucleotide sequence ID" value="NC_011770.1"/>
</dbReference>
<dbReference type="SMR" id="B7VB77"/>
<dbReference type="KEGG" id="pag:PLES_35271"/>
<dbReference type="HOGENOM" id="CLU_033058_2_0_6"/>
<dbReference type="GO" id="GO:0005737">
    <property type="term" value="C:cytoplasm"/>
    <property type="evidence" value="ECO:0007669"/>
    <property type="project" value="UniProtKB-SubCell"/>
</dbReference>
<dbReference type="GO" id="GO:0003755">
    <property type="term" value="F:peptidyl-prolyl cis-trans isomerase activity"/>
    <property type="evidence" value="ECO:0007669"/>
    <property type="project" value="UniProtKB-UniRule"/>
</dbReference>
<dbReference type="GO" id="GO:0044183">
    <property type="term" value="F:protein folding chaperone"/>
    <property type="evidence" value="ECO:0007669"/>
    <property type="project" value="TreeGrafter"/>
</dbReference>
<dbReference type="GO" id="GO:0043022">
    <property type="term" value="F:ribosome binding"/>
    <property type="evidence" value="ECO:0007669"/>
    <property type="project" value="TreeGrafter"/>
</dbReference>
<dbReference type="GO" id="GO:0051083">
    <property type="term" value="P:'de novo' cotranslational protein folding"/>
    <property type="evidence" value="ECO:0007669"/>
    <property type="project" value="TreeGrafter"/>
</dbReference>
<dbReference type="GO" id="GO:0051301">
    <property type="term" value="P:cell division"/>
    <property type="evidence" value="ECO:0007669"/>
    <property type="project" value="UniProtKB-KW"/>
</dbReference>
<dbReference type="GO" id="GO:0061077">
    <property type="term" value="P:chaperone-mediated protein folding"/>
    <property type="evidence" value="ECO:0007669"/>
    <property type="project" value="TreeGrafter"/>
</dbReference>
<dbReference type="GO" id="GO:0015031">
    <property type="term" value="P:protein transport"/>
    <property type="evidence" value="ECO:0007669"/>
    <property type="project" value="UniProtKB-UniRule"/>
</dbReference>
<dbReference type="GO" id="GO:0043335">
    <property type="term" value="P:protein unfolding"/>
    <property type="evidence" value="ECO:0007669"/>
    <property type="project" value="TreeGrafter"/>
</dbReference>
<dbReference type="FunFam" id="3.10.50.40:FF:000001">
    <property type="entry name" value="Trigger factor"/>
    <property type="match status" value="1"/>
</dbReference>
<dbReference type="FunFam" id="3.30.70.1050:FF:000001">
    <property type="entry name" value="Trigger factor"/>
    <property type="match status" value="1"/>
</dbReference>
<dbReference type="Gene3D" id="3.10.50.40">
    <property type="match status" value="1"/>
</dbReference>
<dbReference type="Gene3D" id="3.30.70.1050">
    <property type="entry name" value="Trigger factor ribosome-binding domain"/>
    <property type="match status" value="1"/>
</dbReference>
<dbReference type="Gene3D" id="1.10.3120.10">
    <property type="entry name" value="Trigger factor, C-terminal domain"/>
    <property type="match status" value="1"/>
</dbReference>
<dbReference type="HAMAP" id="MF_00303">
    <property type="entry name" value="Trigger_factor_Tig"/>
    <property type="match status" value="1"/>
</dbReference>
<dbReference type="InterPro" id="IPR046357">
    <property type="entry name" value="PPIase_dom_sf"/>
</dbReference>
<dbReference type="InterPro" id="IPR001179">
    <property type="entry name" value="PPIase_FKBP_dom"/>
</dbReference>
<dbReference type="InterPro" id="IPR005215">
    <property type="entry name" value="Trig_fac"/>
</dbReference>
<dbReference type="InterPro" id="IPR008880">
    <property type="entry name" value="Trigger_fac_C"/>
</dbReference>
<dbReference type="InterPro" id="IPR037041">
    <property type="entry name" value="Trigger_fac_C_sf"/>
</dbReference>
<dbReference type="InterPro" id="IPR008881">
    <property type="entry name" value="Trigger_fac_ribosome-bd_bac"/>
</dbReference>
<dbReference type="InterPro" id="IPR036611">
    <property type="entry name" value="Trigger_fac_ribosome-bd_sf"/>
</dbReference>
<dbReference type="InterPro" id="IPR027304">
    <property type="entry name" value="Trigger_fact/SurA_dom_sf"/>
</dbReference>
<dbReference type="NCBIfam" id="TIGR00115">
    <property type="entry name" value="tig"/>
    <property type="match status" value="1"/>
</dbReference>
<dbReference type="PANTHER" id="PTHR30560">
    <property type="entry name" value="TRIGGER FACTOR CHAPERONE AND PEPTIDYL-PROLYL CIS/TRANS ISOMERASE"/>
    <property type="match status" value="1"/>
</dbReference>
<dbReference type="PANTHER" id="PTHR30560:SF3">
    <property type="entry name" value="TRIGGER FACTOR-LIKE PROTEIN TIG, CHLOROPLASTIC"/>
    <property type="match status" value="1"/>
</dbReference>
<dbReference type="Pfam" id="PF00254">
    <property type="entry name" value="FKBP_C"/>
    <property type="match status" value="1"/>
</dbReference>
<dbReference type="Pfam" id="PF05698">
    <property type="entry name" value="Trigger_C"/>
    <property type="match status" value="1"/>
</dbReference>
<dbReference type="Pfam" id="PF05697">
    <property type="entry name" value="Trigger_N"/>
    <property type="match status" value="1"/>
</dbReference>
<dbReference type="PIRSF" id="PIRSF003095">
    <property type="entry name" value="Trigger_factor"/>
    <property type="match status" value="1"/>
</dbReference>
<dbReference type="SUPFAM" id="SSF54534">
    <property type="entry name" value="FKBP-like"/>
    <property type="match status" value="1"/>
</dbReference>
<dbReference type="SUPFAM" id="SSF109998">
    <property type="entry name" value="Triger factor/SurA peptide-binding domain-like"/>
    <property type="match status" value="1"/>
</dbReference>
<dbReference type="SUPFAM" id="SSF102735">
    <property type="entry name" value="Trigger factor ribosome-binding domain"/>
    <property type="match status" value="1"/>
</dbReference>
<dbReference type="PROSITE" id="PS50059">
    <property type="entry name" value="FKBP_PPIASE"/>
    <property type="match status" value="1"/>
</dbReference>
<reference key="1">
    <citation type="journal article" date="2009" name="Genome Res.">
        <title>Newly introduced genomic prophage islands are critical determinants of in vivo competitiveness in the Liverpool epidemic strain of Pseudomonas aeruginosa.</title>
        <authorList>
            <person name="Winstanley C."/>
            <person name="Langille M.G.I."/>
            <person name="Fothergill J.L."/>
            <person name="Kukavica-Ibrulj I."/>
            <person name="Paradis-Bleau C."/>
            <person name="Sanschagrin F."/>
            <person name="Thomson N.R."/>
            <person name="Winsor G.L."/>
            <person name="Quail M.A."/>
            <person name="Lennard N."/>
            <person name="Bignell A."/>
            <person name="Clarke L."/>
            <person name="Seeger K."/>
            <person name="Saunders D."/>
            <person name="Harris D."/>
            <person name="Parkhill J."/>
            <person name="Hancock R.E.W."/>
            <person name="Brinkman F.S.L."/>
            <person name="Levesque R.C."/>
        </authorList>
    </citation>
    <scope>NUCLEOTIDE SEQUENCE [LARGE SCALE GENOMIC DNA]</scope>
    <source>
        <strain>LESB58</strain>
    </source>
</reference>
<sequence>MQVSVESTSALERRMTVGVPAERIETEVNKRLQQTARRAKIPGFRPGKVPMSVIRQRYEASARQEAMGDLIQETFYEAVVEQKLNPAGSPSVEPKSFEKGKDLEYIATFEVFPEFTVSGLEDIKVERLQAEVSDADVDNMLDVLRKQNTRFEVVERAAQNDDQLNIDFVGKIDGEAFAGGSAKGTLLVLGSGRMIAGFEEGLVGAKAGEERVLNLTFPEDYQNLDLANKAAEFTVTVNSVAEPKLPELNEEFFALFGVKETGLDGFRAEVQKNMERELRQAIKSKVKNQVMEGLLQANPIEVPKALIGNEVNRLRVQAVQQFGGNIKPDQLPAELFEEQAKRRVVLGLIVAEVVKQHELKADEGRVREMIEEMASAYQEPEQVVAWYFKNEPQLNEVRSVVLEEQVVDTVLQKATVTDKQVSYEEAVKPAEAPQAA</sequence>
<name>TIG_PSEA8</name>
<evidence type="ECO:0000255" key="1">
    <source>
        <dbReference type="HAMAP-Rule" id="MF_00303"/>
    </source>
</evidence>
<gene>
    <name evidence="1" type="primary">tig</name>
    <name type="ordered locus">PLES_35271</name>
</gene>